<reference key="1">
    <citation type="journal article" date="2001" name="Science">
        <title>Comparative genomics of Listeria species.</title>
        <authorList>
            <person name="Glaser P."/>
            <person name="Frangeul L."/>
            <person name="Buchrieser C."/>
            <person name="Rusniok C."/>
            <person name="Amend A."/>
            <person name="Baquero F."/>
            <person name="Berche P."/>
            <person name="Bloecker H."/>
            <person name="Brandt P."/>
            <person name="Chakraborty T."/>
            <person name="Charbit A."/>
            <person name="Chetouani F."/>
            <person name="Couve E."/>
            <person name="de Daruvar A."/>
            <person name="Dehoux P."/>
            <person name="Domann E."/>
            <person name="Dominguez-Bernal G."/>
            <person name="Duchaud E."/>
            <person name="Durant L."/>
            <person name="Dussurget O."/>
            <person name="Entian K.-D."/>
            <person name="Fsihi H."/>
            <person name="Garcia-del Portillo F."/>
            <person name="Garrido P."/>
            <person name="Gautier L."/>
            <person name="Goebel W."/>
            <person name="Gomez-Lopez N."/>
            <person name="Hain T."/>
            <person name="Hauf J."/>
            <person name="Jackson D."/>
            <person name="Jones L.-M."/>
            <person name="Kaerst U."/>
            <person name="Kreft J."/>
            <person name="Kuhn M."/>
            <person name="Kunst F."/>
            <person name="Kurapkat G."/>
            <person name="Madueno E."/>
            <person name="Maitournam A."/>
            <person name="Mata Vicente J."/>
            <person name="Ng E."/>
            <person name="Nedjari H."/>
            <person name="Nordsiek G."/>
            <person name="Novella S."/>
            <person name="de Pablos B."/>
            <person name="Perez-Diaz J.-C."/>
            <person name="Purcell R."/>
            <person name="Remmel B."/>
            <person name="Rose M."/>
            <person name="Schlueter T."/>
            <person name="Simoes N."/>
            <person name="Tierrez A."/>
            <person name="Vazquez-Boland J.-A."/>
            <person name="Voss H."/>
            <person name="Wehland J."/>
            <person name="Cossart P."/>
        </authorList>
    </citation>
    <scope>NUCLEOTIDE SEQUENCE [LARGE SCALE GENOMIC DNA]</scope>
    <source>
        <strain>ATCC BAA-679 / EGD-e</strain>
    </source>
</reference>
<keyword id="KW-0067">ATP-binding</keyword>
<keyword id="KW-0227">DNA damage</keyword>
<keyword id="KW-0234">DNA repair</keyword>
<keyword id="KW-0238">DNA-binding</keyword>
<keyword id="KW-0269">Exonuclease</keyword>
<keyword id="KW-0347">Helicase</keyword>
<keyword id="KW-0378">Hydrolase</keyword>
<keyword id="KW-0413">Isomerase</keyword>
<keyword id="KW-0540">Nuclease</keyword>
<keyword id="KW-0547">Nucleotide-binding</keyword>
<keyword id="KW-1185">Reference proteome</keyword>
<feature type="chain" id="PRO_0000379296" description="ATP-dependent helicase/nuclease subunit A">
    <location>
        <begin position="1"/>
        <end position="1235"/>
    </location>
</feature>
<feature type="domain" description="UvrD-like helicase ATP-binding" evidence="1">
    <location>
        <begin position="12"/>
        <end position="482"/>
    </location>
</feature>
<feature type="domain" description="UvrD-like helicase C-terminal" evidence="1">
    <location>
        <begin position="509"/>
        <end position="800"/>
    </location>
</feature>
<feature type="binding site" evidence="1">
    <location>
        <begin position="33"/>
        <end position="40"/>
    </location>
    <ligand>
        <name>ATP</name>
        <dbReference type="ChEBI" id="CHEBI:30616"/>
    </ligand>
</feature>
<sequence length="1235" mass="142656">MSLNIPPKPEESLWTDDQWKAIQAKGNNVLVAAAAGSGKTAVLVTRIIEKLIDESANLNVDELLIVTFTNASAAEMKFRIGKGLEEALGQNPDSAHLKRQVALLNYASISTLHSFCLEIIRKYYFEADIDPSFRLIEPIESSMIRDEVLEGLLEQEYGIENNEAFFHLVESFTGDRSDAELHSLISKLYDFSRANPDPNAWLEAMVNFYNTEEITSITELPYFPIIKEDIELRVNQAKNYLLNAINYANENNGPAPYLATLENDLVQIQALSELNWSSWTHLKTSIENIDFKRIPTLKNKSDYDEVYVEEAKKFRDAAKKEMKNIATDWFSREEVNCLSDLEKMKPDIQTLSELVKKFSANFFEEKQQRGVLDFNDLEHLALKILLNDDKASEVAQNYQKQFKEVLIDEYQDTNMVQETILRLVTNPSEAQGNLFMVGDVKQSIYRFRLAEPTLFMTKYQTFQQDGSGNGIRIDLSQNFRSRKEVLDATNFIFRQLMDKHIAEIDYDTAAELTLGANFPETNAMETELLLIDMKTEDTETEDELSPQELQKNQVESRAIAMKIREMIDNKFPIYDKKLKQNRPIQYRDIIILSRAMTSAPDMEEAMKVQDIPFYANNNSGYFETTEVATMIALMKVVDNPYQDIPLAAVLRSPIIGLNEEELGQIRMAKKKGYFYDALLTYKDITVSETANKISDFVQQLNNWRELSIRENLTSLIWQIYQETNFYEFVGGLPGGKQRQANLRALYDRANQYEKTSFRGLFRFVRFVERLEIRGDDLGTAKTLGEKEDVVRMMTIHASKGLEFPVVIVSGLSRKFNMRDIYSKTLLDKDYGFASSYRDVEKMIVYPTIMQQAIKQKKSREMIAEEMRVLYVALTRAEEKLILVATVPDFEKTSKNWLQVAKEKETILPAATRAKAKCYLDWIGNATIRHPAFKELLCEEIIQTLATEMKLQIEIKTKEMFLTNELERAESDNWLENIKEHQPVPIQSPYKDEIQRYMEYEYQNEAATEIRAKQSVTELKRQFSLQDSWSDTTLLKEFQKVSLDRPKFLQKNKLSATEIGTAMHTLMQAVSLDYKPTKEDLEQLLHTMREKDILTDVQIKAINIKQILDFFESPLGETMLQKKDLVKREVPFSYLLPVSELYEKVDLDERVLIQGVVDSMIEEEETITLIDYKTDKIEGRYADWNAAEKVMKERYHIQIKLYAEAIQAISGKKVAAAYLYFFDGQHICQINTKEGL</sequence>
<protein>
    <recommendedName>
        <fullName evidence="1">ATP-dependent helicase/nuclease subunit A</fullName>
        <ecNumber evidence="1">3.1.-.-</ecNumber>
        <ecNumber evidence="1">5.6.2.4</ecNumber>
    </recommendedName>
    <alternativeName>
        <fullName evidence="1">ATP-dependent helicase/nuclease AddA</fullName>
    </alternativeName>
    <alternativeName>
        <fullName evidence="1">DNA 3'-5' helicase AddA</fullName>
    </alternativeName>
</protein>
<proteinExistence type="inferred from homology"/>
<accession>Q8Y511</accession>
<dbReference type="EC" id="3.1.-.-" evidence="1"/>
<dbReference type="EC" id="5.6.2.4" evidence="1"/>
<dbReference type="EMBL" id="AL591982">
    <property type="protein sequence ID" value="CAD00345.1"/>
    <property type="molecule type" value="Genomic_DNA"/>
</dbReference>
<dbReference type="PIR" id="AC1358">
    <property type="entry name" value="AC1358"/>
</dbReference>
<dbReference type="RefSeq" id="NP_465791.1">
    <property type="nucleotide sequence ID" value="NC_003210.1"/>
</dbReference>
<dbReference type="RefSeq" id="WP_010989936.1">
    <property type="nucleotide sequence ID" value="NZ_CP149495.1"/>
</dbReference>
<dbReference type="SMR" id="Q8Y511"/>
<dbReference type="STRING" id="169963.gene:17594958"/>
<dbReference type="PaxDb" id="169963-lmo2267"/>
<dbReference type="EnsemblBacteria" id="CAD00345">
    <property type="protein sequence ID" value="CAD00345"/>
    <property type="gene ID" value="CAD00345"/>
</dbReference>
<dbReference type="GeneID" id="985303"/>
<dbReference type="KEGG" id="lmo:lmo2267"/>
<dbReference type="PATRIC" id="fig|169963.11.peg.2319"/>
<dbReference type="eggNOG" id="COG1074">
    <property type="taxonomic scope" value="Bacteria"/>
</dbReference>
<dbReference type="HOGENOM" id="CLU_001114_3_1_9"/>
<dbReference type="OrthoDB" id="9810135at2"/>
<dbReference type="PhylomeDB" id="Q8Y511"/>
<dbReference type="BioCyc" id="LMON169963:LMO2267-MONOMER"/>
<dbReference type="Proteomes" id="UP000000817">
    <property type="component" value="Chromosome"/>
</dbReference>
<dbReference type="GO" id="GO:0005829">
    <property type="term" value="C:cytosol"/>
    <property type="evidence" value="ECO:0000318"/>
    <property type="project" value="GO_Central"/>
</dbReference>
<dbReference type="GO" id="GO:0033202">
    <property type="term" value="C:DNA helicase complex"/>
    <property type="evidence" value="ECO:0000318"/>
    <property type="project" value="GO_Central"/>
</dbReference>
<dbReference type="GO" id="GO:0043138">
    <property type="term" value="F:3'-5' DNA helicase activity"/>
    <property type="evidence" value="ECO:0000318"/>
    <property type="project" value="GO_Central"/>
</dbReference>
<dbReference type="GO" id="GO:0008408">
    <property type="term" value="F:3'-5' exonuclease activity"/>
    <property type="evidence" value="ECO:0007669"/>
    <property type="project" value="UniProtKB-UniRule"/>
</dbReference>
<dbReference type="GO" id="GO:0005524">
    <property type="term" value="F:ATP binding"/>
    <property type="evidence" value="ECO:0007669"/>
    <property type="project" value="UniProtKB-UniRule"/>
</dbReference>
<dbReference type="GO" id="GO:0016887">
    <property type="term" value="F:ATP hydrolysis activity"/>
    <property type="evidence" value="ECO:0007669"/>
    <property type="project" value="RHEA"/>
</dbReference>
<dbReference type="GO" id="GO:0003690">
    <property type="term" value="F:double-stranded DNA binding"/>
    <property type="evidence" value="ECO:0007669"/>
    <property type="project" value="UniProtKB-UniRule"/>
</dbReference>
<dbReference type="GO" id="GO:0000724">
    <property type="term" value="P:double-strand break repair via homologous recombination"/>
    <property type="evidence" value="ECO:0007669"/>
    <property type="project" value="UniProtKB-UniRule"/>
</dbReference>
<dbReference type="GO" id="GO:0000725">
    <property type="term" value="P:recombinational repair"/>
    <property type="evidence" value="ECO:0000318"/>
    <property type="project" value="GO_Central"/>
</dbReference>
<dbReference type="CDD" id="cd17932">
    <property type="entry name" value="DEXQc_UvrD"/>
    <property type="match status" value="1"/>
</dbReference>
<dbReference type="FunFam" id="3.40.50.300:FF:001164">
    <property type="entry name" value="ATP-dependent helicase/nuclease subunit A"/>
    <property type="match status" value="1"/>
</dbReference>
<dbReference type="FunFam" id="3.40.50.300:FF:001187">
    <property type="entry name" value="ATP-dependent helicase/nuclease subunit A"/>
    <property type="match status" value="1"/>
</dbReference>
<dbReference type="FunFam" id="3.40.50.300:FF:001196">
    <property type="entry name" value="ATP-dependent helicase/nuclease subunit A"/>
    <property type="match status" value="1"/>
</dbReference>
<dbReference type="FunFam" id="3.40.50.300:FF:001236">
    <property type="entry name" value="ATP-dependent helicase/nuclease subunit A"/>
    <property type="match status" value="1"/>
</dbReference>
<dbReference type="Gene3D" id="3.90.320.10">
    <property type="match status" value="1"/>
</dbReference>
<dbReference type="Gene3D" id="3.40.50.300">
    <property type="entry name" value="P-loop containing nucleotide triphosphate hydrolases"/>
    <property type="match status" value="4"/>
</dbReference>
<dbReference type="HAMAP" id="MF_01451">
    <property type="entry name" value="AddA"/>
    <property type="match status" value="1"/>
</dbReference>
<dbReference type="InterPro" id="IPR014152">
    <property type="entry name" value="AddA"/>
</dbReference>
<dbReference type="InterPro" id="IPR014017">
    <property type="entry name" value="DNA_helicase_UvrD-like_C"/>
</dbReference>
<dbReference type="InterPro" id="IPR000212">
    <property type="entry name" value="DNA_helicase_UvrD/REP"/>
</dbReference>
<dbReference type="InterPro" id="IPR027417">
    <property type="entry name" value="P-loop_NTPase"/>
</dbReference>
<dbReference type="InterPro" id="IPR011604">
    <property type="entry name" value="PDDEXK-like_dom_sf"/>
</dbReference>
<dbReference type="InterPro" id="IPR038726">
    <property type="entry name" value="PDDEXK_AddAB-type"/>
</dbReference>
<dbReference type="InterPro" id="IPR011335">
    <property type="entry name" value="Restrct_endonuc-II-like"/>
</dbReference>
<dbReference type="InterPro" id="IPR014016">
    <property type="entry name" value="UvrD-like_ATP-bd"/>
</dbReference>
<dbReference type="NCBIfam" id="TIGR02785">
    <property type="entry name" value="addA_Gpos"/>
    <property type="match status" value="1"/>
</dbReference>
<dbReference type="PANTHER" id="PTHR11070:SF48">
    <property type="entry name" value="ATP-DEPENDENT HELICASE_NUCLEASE SUBUNIT A"/>
    <property type="match status" value="1"/>
</dbReference>
<dbReference type="PANTHER" id="PTHR11070">
    <property type="entry name" value="UVRD / RECB / PCRA DNA HELICASE FAMILY MEMBER"/>
    <property type="match status" value="1"/>
</dbReference>
<dbReference type="Pfam" id="PF12705">
    <property type="entry name" value="PDDEXK_1"/>
    <property type="match status" value="1"/>
</dbReference>
<dbReference type="Pfam" id="PF00580">
    <property type="entry name" value="UvrD-helicase"/>
    <property type="match status" value="1"/>
</dbReference>
<dbReference type="Pfam" id="PF13361">
    <property type="entry name" value="UvrD_C"/>
    <property type="match status" value="1"/>
</dbReference>
<dbReference type="SUPFAM" id="SSF52540">
    <property type="entry name" value="P-loop containing nucleoside triphosphate hydrolases"/>
    <property type="match status" value="1"/>
</dbReference>
<dbReference type="SUPFAM" id="SSF52980">
    <property type="entry name" value="Restriction endonuclease-like"/>
    <property type="match status" value="1"/>
</dbReference>
<dbReference type="PROSITE" id="PS51198">
    <property type="entry name" value="UVRD_HELICASE_ATP_BIND"/>
    <property type="match status" value="1"/>
</dbReference>
<dbReference type="PROSITE" id="PS51217">
    <property type="entry name" value="UVRD_HELICASE_CTER"/>
    <property type="match status" value="1"/>
</dbReference>
<gene>
    <name evidence="1" type="primary">addA</name>
    <name type="ordered locus">lmo2267</name>
</gene>
<organism>
    <name type="scientific">Listeria monocytogenes serovar 1/2a (strain ATCC BAA-679 / EGD-e)</name>
    <dbReference type="NCBI Taxonomy" id="169963"/>
    <lineage>
        <taxon>Bacteria</taxon>
        <taxon>Bacillati</taxon>
        <taxon>Bacillota</taxon>
        <taxon>Bacilli</taxon>
        <taxon>Bacillales</taxon>
        <taxon>Listeriaceae</taxon>
        <taxon>Listeria</taxon>
    </lineage>
</organism>
<comment type="function">
    <text evidence="1">The heterodimer acts as both an ATP-dependent DNA helicase and an ATP-dependent, dual-direction single-stranded exonuclease. Recognizes the chi site generating a DNA molecule suitable for the initiation of homologous recombination. The AddA nuclease domain is required for chi fragment generation; this subunit has the helicase and 3' -&gt; 5' nuclease activities.</text>
</comment>
<comment type="catalytic activity">
    <reaction evidence="1">
        <text>Couples ATP hydrolysis with the unwinding of duplex DNA by translocating in the 3'-5' direction.</text>
        <dbReference type="EC" id="5.6.2.4"/>
    </reaction>
</comment>
<comment type="catalytic activity">
    <reaction evidence="1">
        <text>ATP + H2O = ADP + phosphate + H(+)</text>
        <dbReference type="Rhea" id="RHEA:13065"/>
        <dbReference type="ChEBI" id="CHEBI:15377"/>
        <dbReference type="ChEBI" id="CHEBI:15378"/>
        <dbReference type="ChEBI" id="CHEBI:30616"/>
        <dbReference type="ChEBI" id="CHEBI:43474"/>
        <dbReference type="ChEBI" id="CHEBI:456216"/>
        <dbReference type="EC" id="5.6.2.4"/>
    </reaction>
</comment>
<comment type="cofactor">
    <cofactor evidence="1">
        <name>Mg(2+)</name>
        <dbReference type="ChEBI" id="CHEBI:18420"/>
    </cofactor>
</comment>
<comment type="subunit">
    <text evidence="1">Heterodimer of AddA and AddB/RexB.</text>
</comment>
<comment type="similarity">
    <text evidence="1">Belongs to the helicase family. AddA subfamily.</text>
</comment>
<name>ADDA_LISMO</name>
<evidence type="ECO:0000255" key="1">
    <source>
        <dbReference type="HAMAP-Rule" id="MF_01451"/>
    </source>
</evidence>